<name>VF108_ASFP4</name>
<organismHost>
    <name type="scientific">Ornithodoros</name>
    <name type="common">relapsing fever ticks</name>
    <dbReference type="NCBI Taxonomy" id="6937"/>
</organismHost>
<organismHost>
    <name type="scientific">Phacochoerus aethiopicus</name>
    <name type="common">Warthog</name>
    <dbReference type="NCBI Taxonomy" id="85517"/>
</organismHost>
<organismHost>
    <name type="scientific">Phacochoerus africanus</name>
    <name type="common">Warthog</name>
    <dbReference type="NCBI Taxonomy" id="41426"/>
</organismHost>
<organismHost>
    <name type="scientific">Potamochoerus larvatus</name>
    <name type="common">Bushpig</name>
    <dbReference type="NCBI Taxonomy" id="273792"/>
</organismHost>
<organismHost>
    <name type="scientific">Sus scrofa</name>
    <name type="common">Pig</name>
    <dbReference type="NCBI Taxonomy" id="9823"/>
</organismHost>
<organism>
    <name type="scientific">African swine fever virus (isolate Tick/South Africa/Pretoriuskop Pr4/1996)</name>
    <name type="common">ASFV</name>
    <dbReference type="NCBI Taxonomy" id="561443"/>
    <lineage>
        <taxon>Viruses</taxon>
        <taxon>Varidnaviria</taxon>
        <taxon>Bamfordvirae</taxon>
        <taxon>Nucleocytoviricota</taxon>
        <taxon>Pokkesviricetes</taxon>
        <taxon>Asfuvirales</taxon>
        <taxon>Asfarviridae</taxon>
        <taxon>Asfivirus</taxon>
        <taxon>African swine fever virus</taxon>
    </lineage>
</organism>
<proteinExistence type="inferred from homology"/>
<dbReference type="EMBL" id="AY261363">
    <property type="status" value="NOT_ANNOTATED_CDS"/>
    <property type="molecule type" value="Genomic_DNA"/>
</dbReference>
<dbReference type="Proteomes" id="UP000000859">
    <property type="component" value="Segment"/>
</dbReference>
<dbReference type="GO" id="GO:0016020">
    <property type="term" value="C:membrane"/>
    <property type="evidence" value="ECO:0007669"/>
    <property type="project" value="UniProtKB-KW"/>
</dbReference>
<dbReference type="GO" id="GO:0055036">
    <property type="term" value="C:virion membrane"/>
    <property type="evidence" value="ECO:0007669"/>
    <property type="project" value="UniProtKB-SubCell"/>
</dbReference>
<feature type="chain" id="PRO_0000373473" description="Inner membrane protein H108R">
    <location>
        <begin position="1"/>
        <end position="108"/>
    </location>
</feature>
<feature type="transmembrane region" description="Helical" evidence="2">
    <location>
        <begin position="10"/>
        <end position="32"/>
    </location>
</feature>
<feature type="region of interest" description="Disordered" evidence="3">
    <location>
        <begin position="49"/>
        <end position="69"/>
    </location>
</feature>
<feature type="compositionally biased region" description="Polar residues" evidence="3">
    <location>
        <begin position="49"/>
        <end position="64"/>
    </location>
</feature>
<feature type="glycosylation site" description="N-linked (GlcNAc...) asparagine; by host" evidence="2">
    <location>
        <position position="50"/>
    </location>
</feature>
<accession>P0CA14</accession>
<sequence>MVNLFPVFTLIVIITILITTRELSTTMLIVSLVTDYIIINTQYTEQQHENNTFSMPQKNSFSESYNKDKKSNTHIPYQWLAPELKEAESKYWWGNYDPHSEPVLAGAS</sequence>
<reference key="1">
    <citation type="submission" date="2003-03" db="EMBL/GenBank/DDBJ databases">
        <title>African swine fever virus genomes.</title>
        <authorList>
            <person name="Kutish G.F."/>
            <person name="Rock D.L."/>
        </authorList>
    </citation>
    <scope>NUCLEOTIDE SEQUENCE [GENOMIC DNA]</scope>
</reference>
<comment type="subcellular location">
    <subcellularLocation>
        <location evidence="1">Virion membrane</location>
        <topology evidence="4">Single-pass membrane protein</topology>
    </subcellularLocation>
    <text evidence="1">Detected mainly on membrane-like structures within viral factories (By similarity). Probably part of the inner envelope (By similarity).</text>
</comment>
<comment type="induction">
    <text evidence="4">Expressed in the late phase of the viral replicative cycle.</text>
</comment>
<comment type="similarity">
    <text evidence="4">Belongs to the asfivirus H108R family.</text>
</comment>
<gene>
    <name type="ordered locus">Pret-129</name>
</gene>
<keyword id="KW-0325">Glycoprotein</keyword>
<keyword id="KW-0426">Late protein</keyword>
<keyword id="KW-0472">Membrane</keyword>
<keyword id="KW-0812">Transmembrane</keyword>
<keyword id="KW-1133">Transmembrane helix</keyword>
<keyword id="KW-0946">Virion</keyword>
<evidence type="ECO:0000250" key="1">
    <source>
        <dbReference type="UniProtKB" id="Q65188"/>
    </source>
</evidence>
<evidence type="ECO:0000255" key="2"/>
<evidence type="ECO:0000256" key="3">
    <source>
        <dbReference type="SAM" id="MobiDB-lite"/>
    </source>
</evidence>
<evidence type="ECO:0000305" key="4"/>
<protein>
    <recommendedName>
        <fullName evidence="4">Inner membrane protein H108R</fullName>
        <shortName>pH108R</shortName>
    </recommendedName>
</protein>